<accession>Q59931</accession>
<organism>
    <name type="scientific">Streptococcus mutans serotype c (strain ATCC 700610 / UA159)</name>
    <dbReference type="NCBI Taxonomy" id="210007"/>
    <lineage>
        <taxon>Bacteria</taxon>
        <taxon>Bacillati</taxon>
        <taxon>Bacillota</taxon>
        <taxon>Bacilli</taxon>
        <taxon>Lactobacillales</taxon>
        <taxon>Streptococcaceae</taxon>
        <taxon>Streptococcus</taxon>
    </lineage>
</organism>
<reference key="1">
    <citation type="journal article" date="1995" name="J. Bacteriol.">
        <title>Sequence, expression, and function of the gene for the nonphosphorylating, NADP-dependent glyceraldehyde-3-phosphate dehydrogenase of Streptococcus mutans.</title>
        <authorList>
            <person name="Boyd D.A."/>
            <person name="Cvitkovitch D.G."/>
            <person name="Hamilton I.R."/>
        </authorList>
    </citation>
    <scope>NUCLEOTIDE SEQUENCE [GENOMIC DNA]</scope>
    <source>
        <strain>NG5 / Serotype c</strain>
    </source>
</reference>
<reference key="2">
    <citation type="journal article" date="2002" name="Proc. Natl. Acad. Sci. U.S.A.">
        <title>Genome sequence of Streptococcus mutans UA159, a cariogenic dental pathogen.</title>
        <authorList>
            <person name="Ajdic D.J."/>
            <person name="McShan W.M."/>
            <person name="McLaughlin R.E."/>
            <person name="Savic G."/>
            <person name="Chang J."/>
            <person name="Carson M.B."/>
            <person name="Primeaux C."/>
            <person name="Tian R."/>
            <person name="Kenton S."/>
            <person name="Jia H.G."/>
            <person name="Lin S.P."/>
            <person name="Qian Y."/>
            <person name="Li S."/>
            <person name="Zhu H."/>
            <person name="Najar F.Z."/>
            <person name="Lai H."/>
            <person name="White J."/>
            <person name="Roe B.A."/>
            <person name="Ferretti J.J."/>
        </authorList>
    </citation>
    <scope>NUCLEOTIDE SEQUENCE [LARGE SCALE GENOMIC DNA]</scope>
    <source>
        <strain>ATCC 700610 / UA159</strain>
    </source>
</reference>
<reference key="3">
    <citation type="journal article" date="1999" name="J. Mol. Biol.">
        <title>Apo and holo crystal structures of an NADP-dependent aldehyde dehydrogenase from Streptococcus mutans.</title>
        <authorList>
            <person name="Cobessi D."/>
            <person name="Tete-Favier F."/>
            <person name="Marchal S."/>
            <person name="Azza S."/>
            <person name="Branlant G."/>
            <person name="Aubry A."/>
        </authorList>
    </citation>
    <scope>X-RAY CRYSTALLOGRAPHY (1.82 ANGSTROMS) IN COMPLEX WITH NADP</scope>
    <scope>HOMOTETRAMERIZATION</scope>
</reference>
<reference key="4">
    <citation type="journal article" date="2000" name="J. Mol. Biol.">
        <title>Structural and biochemical investigations of the catalytic mechanism of an NADP-dependent aldehyde dehydrogenase from Streptococcus mutans.</title>
        <authorList>
            <person name="Cobessi D."/>
            <person name="Tete-Favier F."/>
            <person name="Marchal S."/>
            <person name="Branlant G."/>
            <person name="Aubry A."/>
        </authorList>
    </citation>
    <scope>X-RAY CRYSTALLOGRAPHY (3.0 ANGSTROMS) IN COMPLEX WITH NADP AND SUBSTRATE</scope>
</reference>
<reference key="5">
    <citation type="journal article" date="2006" name="Biochem. J.">
        <title>Invariant Thr244 is essential for the efficient acylation step of the non-phosphorylating glyceraldehyde-3-phosphate dehydrogenase from Streptococcus mutans.</title>
        <authorList>
            <person name="Pailot A."/>
            <person name="D'Ambrosio K."/>
            <person name="Corbier C."/>
            <person name="Talfournier F."/>
            <person name="Branlant G."/>
        </authorList>
    </citation>
    <scope>X-RAY CRYSTALLOGRAPHY (2.5 ANGSTROMS) IN COMPLEX WITH NADP</scope>
    <scope>CHARACTERIZATION</scope>
</reference>
<protein>
    <recommendedName>
        <fullName>NADP-dependent glyceraldehyde-3-phosphate dehydrogenase</fullName>
        <ecNumber>1.2.1.9</ecNumber>
    </recommendedName>
    <alternativeName>
        <fullName>Glyceraldehyde-3-phosphate dehydrogenase [NADP(+)]</fullName>
    </alternativeName>
    <alternativeName>
        <fullName>Non-phosphorylating glyceraldehyde 3-phosphate dehydrogenase</fullName>
    </alternativeName>
    <alternativeName>
        <fullName>Triosephosphate dehydrogenase</fullName>
    </alternativeName>
</protein>
<evidence type="ECO:0000255" key="1">
    <source>
        <dbReference type="PROSITE-ProRule" id="PRU10008"/>
    </source>
</evidence>
<evidence type="ECO:0000269" key="2">
    <source>
    </source>
</evidence>
<evidence type="ECO:0000269" key="3">
    <source>
    </source>
</evidence>
<evidence type="ECO:0000269" key="4">
    <source>
    </source>
</evidence>
<evidence type="ECO:0000305" key="5"/>
<evidence type="ECO:0007829" key="6">
    <source>
        <dbReference type="PDB" id="1EUH"/>
    </source>
</evidence>
<evidence type="ECO:0007829" key="7">
    <source>
        <dbReference type="PDB" id="1QI6"/>
    </source>
</evidence>
<evidence type="ECO:0007829" key="8">
    <source>
        <dbReference type="PDB" id="2ESD"/>
    </source>
</evidence>
<evidence type="ECO:0007829" key="9">
    <source>
        <dbReference type="PDB" id="2QE0"/>
    </source>
</evidence>
<dbReference type="EC" id="1.2.1.9"/>
<dbReference type="EMBL" id="L38521">
    <property type="protein sequence ID" value="AAA91091.1"/>
    <property type="molecule type" value="Genomic_DNA"/>
</dbReference>
<dbReference type="EMBL" id="AE014133">
    <property type="protein sequence ID" value="AAN58410.1"/>
    <property type="molecule type" value="Genomic_DNA"/>
</dbReference>
<dbReference type="PIR" id="A57151">
    <property type="entry name" value="A57151"/>
</dbReference>
<dbReference type="RefSeq" id="NP_721104.1">
    <property type="nucleotide sequence ID" value="NC_004350.2"/>
</dbReference>
<dbReference type="RefSeq" id="WP_002262986.1">
    <property type="nucleotide sequence ID" value="NC_004350.2"/>
</dbReference>
<dbReference type="PDB" id="1EUH">
    <property type="method" value="X-ray"/>
    <property type="resolution" value="1.82 A"/>
    <property type="chains" value="A/B/C/D=1-475"/>
</dbReference>
<dbReference type="PDB" id="1QI1">
    <property type="method" value="X-ray"/>
    <property type="resolution" value="3.00 A"/>
    <property type="chains" value="A/B/C/D=1-475"/>
</dbReference>
<dbReference type="PDB" id="1QI6">
    <property type="method" value="X-ray"/>
    <property type="resolution" value="2.50 A"/>
    <property type="chains" value="A/B/C/D=1-475"/>
</dbReference>
<dbReference type="PDB" id="2ESD">
    <property type="method" value="X-ray"/>
    <property type="resolution" value="2.55 A"/>
    <property type="chains" value="A/B/C/D=1-475"/>
</dbReference>
<dbReference type="PDB" id="2EUH">
    <property type="method" value="X-ray"/>
    <property type="resolution" value="2.60 A"/>
    <property type="chains" value="A/B/C/D=1-475"/>
</dbReference>
<dbReference type="PDB" id="2ID2">
    <property type="method" value="X-ray"/>
    <property type="resolution" value="2.50 A"/>
    <property type="chains" value="A/B/C/D=1-475"/>
</dbReference>
<dbReference type="PDB" id="2QE0">
    <property type="method" value="X-ray"/>
    <property type="resolution" value="2.19 A"/>
    <property type="chains" value="A/B/C/D=1-475"/>
</dbReference>
<dbReference type="PDBsum" id="1EUH"/>
<dbReference type="PDBsum" id="1QI1"/>
<dbReference type="PDBsum" id="1QI6"/>
<dbReference type="PDBsum" id="2ESD"/>
<dbReference type="PDBsum" id="2EUH"/>
<dbReference type="PDBsum" id="2ID2"/>
<dbReference type="PDBsum" id="2QE0"/>
<dbReference type="SMR" id="Q59931"/>
<dbReference type="STRING" id="210007.SMU_676"/>
<dbReference type="DrugBank" id="DB02263">
    <property type="generic name" value="D-glyceraldehyde 3-phosphate"/>
</dbReference>
<dbReference type="DrugBank" id="DB03461">
    <property type="generic name" value="Nicotinamide adenine dinucleotide phosphate"/>
</dbReference>
<dbReference type="GeneID" id="93859767"/>
<dbReference type="KEGG" id="smu:SMU_676"/>
<dbReference type="PATRIC" id="fig|210007.7.peg.601"/>
<dbReference type="eggNOG" id="COG1012">
    <property type="taxonomic scope" value="Bacteria"/>
</dbReference>
<dbReference type="HOGENOM" id="CLU_005391_1_0_9"/>
<dbReference type="OrthoDB" id="9762913at2"/>
<dbReference type="PhylomeDB" id="Q59931"/>
<dbReference type="BioCyc" id="MetaCyc:MONOMER-13095"/>
<dbReference type="BRENDA" id="1.2.1.9">
    <property type="organism ID" value="5941"/>
</dbReference>
<dbReference type="SABIO-RK" id="Q59931"/>
<dbReference type="EvolutionaryTrace" id="Q59931"/>
<dbReference type="Proteomes" id="UP000002512">
    <property type="component" value="Chromosome"/>
</dbReference>
<dbReference type="GO" id="GO:0008886">
    <property type="term" value="F:glyceraldehyde-3-phosphate dehydrogenase (NADP+) (non-phosphorylating) activity"/>
    <property type="evidence" value="ECO:0007669"/>
    <property type="project" value="UniProtKB-EC"/>
</dbReference>
<dbReference type="GO" id="GO:0047100">
    <property type="term" value="F:glyceraldehyde-3-phosphate dehydrogenase (NADP+) (phosphorylating) activity"/>
    <property type="evidence" value="ECO:0000314"/>
    <property type="project" value="CACAO"/>
</dbReference>
<dbReference type="GO" id="GO:0008911">
    <property type="term" value="F:lactaldehyde dehydrogenase (NAD+) activity"/>
    <property type="evidence" value="ECO:0007669"/>
    <property type="project" value="TreeGrafter"/>
</dbReference>
<dbReference type="CDD" id="cd07082">
    <property type="entry name" value="ALDH_F11_NP-GAPDH"/>
    <property type="match status" value="1"/>
</dbReference>
<dbReference type="FunFam" id="3.40.309.10:FF:000022">
    <property type="entry name" value="NADP-dependent glyceraldehyde-3-phosphate dehydrogenase"/>
    <property type="match status" value="1"/>
</dbReference>
<dbReference type="FunFam" id="3.40.605.10:FF:000025">
    <property type="entry name" value="NADP-dependent glyceraldehyde-3-phosphate dehydrogenase"/>
    <property type="match status" value="1"/>
</dbReference>
<dbReference type="Gene3D" id="3.40.605.10">
    <property type="entry name" value="Aldehyde Dehydrogenase, Chain A, domain 1"/>
    <property type="match status" value="1"/>
</dbReference>
<dbReference type="Gene3D" id="3.40.309.10">
    <property type="entry name" value="Aldehyde Dehydrogenase, Chain A, domain 2"/>
    <property type="match status" value="1"/>
</dbReference>
<dbReference type="InterPro" id="IPR016161">
    <property type="entry name" value="Ald_DH/histidinol_DH"/>
</dbReference>
<dbReference type="InterPro" id="IPR016163">
    <property type="entry name" value="Ald_DH_C"/>
</dbReference>
<dbReference type="InterPro" id="IPR016160">
    <property type="entry name" value="Ald_DH_CS_CYS"/>
</dbReference>
<dbReference type="InterPro" id="IPR016162">
    <property type="entry name" value="Ald_DH_N"/>
</dbReference>
<dbReference type="InterPro" id="IPR015590">
    <property type="entry name" value="Aldehyde_DH_dom"/>
</dbReference>
<dbReference type="InterPro" id="IPR051020">
    <property type="entry name" value="ALDH-related_metabolic_enz"/>
</dbReference>
<dbReference type="PANTHER" id="PTHR42991">
    <property type="entry name" value="ALDEHYDE DEHYDROGENASE"/>
    <property type="match status" value="1"/>
</dbReference>
<dbReference type="PANTHER" id="PTHR42991:SF1">
    <property type="entry name" value="ALDEHYDE DEHYDROGENASE"/>
    <property type="match status" value="1"/>
</dbReference>
<dbReference type="Pfam" id="PF00171">
    <property type="entry name" value="Aldedh"/>
    <property type="match status" value="1"/>
</dbReference>
<dbReference type="SUPFAM" id="SSF53720">
    <property type="entry name" value="ALDH-like"/>
    <property type="match status" value="1"/>
</dbReference>
<dbReference type="PROSITE" id="PS00070">
    <property type="entry name" value="ALDEHYDE_DEHYDR_CYS"/>
    <property type="match status" value="1"/>
</dbReference>
<gene>
    <name type="primary">gapN</name>
    <name type="ordered locus">SMU_676</name>
</gene>
<sequence>MTKQYKNYVNGEWKLSENEIKIYEPASGAELGSVPAMSTEEVDYVYASAKKAQPAWRSLSYIERAAYLHKVADILMRDKEKIGAVLSKEVAKGYKSAVSEVVRTAEIINYAAEEGLRMEGEVLEGGSFEAASKKKIAVVRREPVGLVLAISPFNYPVNLAGSKIAPALIAGNVIAFKPPTQGSISGLLLAEAFAEAGLPAGVFNTITGRGSEIGDYIVEHQAVNFINFTGSTGIGERIGKMAGMRPIMLELGGKDSAIVLEDADLELTAKNIIAGAFGYSGQRCTAVKRVLVMESVADELVEKIREKVLALTIGNPEDDADITPLIDTKSADYVEGLINDANDKGAAALTEIKREGNLICPILFDKVTTDMRLAWEEPFGPVLPIIRVTSVEEAIEISNKSEYGLQASIFTNDFPRAFGIAEQLEVGTVHINNKTQRGTDNFPFLGAKKSGAGIQGVKYSIEAMTTVKSVVFDIK</sequence>
<name>GAPN_STRMU</name>
<proteinExistence type="evidence at protein level"/>
<feature type="chain" id="PRO_0000056579" description="NADP-dependent glyceraldehyde-3-phosphate dehydrogenase">
    <location>
        <begin position="1"/>
        <end position="475"/>
    </location>
</feature>
<feature type="active site" evidence="1">
    <location>
        <position position="250"/>
    </location>
</feature>
<feature type="active site" evidence="1">
    <location>
        <position position="284"/>
    </location>
</feature>
<feature type="binding site" evidence="3">
    <location>
        <position position="103"/>
    </location>
    <ligand>
        <name>substrate</name>
    </ligand>
</feature>
<feature type="binding site" evidence="2 3 4">
    <location>
        <position position="151"/>
    </location>
    <ligand>
        <name>NADP(+)</name>
        <dbReference type="ChEBI" id="CHEBI:58349"/>
    </ligand>
</feature>
<feature type="binding site">
    <location>
        <begin position="154"/>
        <end position="155"/>
    </location>
    <ligand>
        <name>substrate</name>
    </ligand>
</feature>
<feature type="binding site" evidence="2 3 4">
    <location>
        <position position="177"/>
    </location>
    <ligand>
        <name>NADP(+)</name>
        <dbReference type="ChEBI" id="CHEBI:58349"/>
    </ligand>
</feature>
<feature type="binding site" evidence="2 3 4">
    <location>
        <position position="180"/>
    </location>
    <ligand>
        <name>NADP(+)</name>
        <dbReference type="ChEBI" id="CHEBI:58349"/>
    </ligand>
</feature>
<feature type="binding site" evidence="2 3 4">
    <location>
        <position position="215"/>
    </location>
    <ligand>
        <name>NADP(+)</name>
        <dbReference type="ChEBI" id="CHEBI:58349"/>
    </ligand>
</feature>
<feature type="binding site" evidence="2 3 4">
    <location>
        <begin position="230"/>
        <end position="251"/>
    </location>
    <ligand>
        <name>NADP(+)</name>
        <dbReference type="ChEBI" id="CHEBI:58349"/>
    </ligand>
</feature>
<feature type="binding site">
    <location>
        <begin position="283"/>
        <end position="285"/>
    </location>
    <ligand>
        <name>substrate</name>
    </ligand>
</feature>
<feature type="binding site" evidence="2 3 4">
    <location>
        <position position="377"/>
    </location>
    <ligand>
        <name>NADP(+)</name>
        <dbReference type="ChEBI" id="CHEBI:58349"/>
    </ligand>
</feature>
<feature type="binding site" evidence="3">
    <location>
        <position position="437"/>
    </location>
    <ligand>
        <name>substrate</name>
    </ligand>
</feature>
<feature type="sequence conflict" description="In Ref. 1; AAA91091." evidence="5" ref="1">
    <original>S</original>
    <variation>A</variation>
    <location>
        <position position="58"/>
    </location>
</feature>
<feature type="sequence conflict" description="In Ref. 1; AAA91091." evidence="5" ref="1">
    <original>V</original>
    <variation>I</variation>
    <location>
        <position position="85"/>
    </location>
</feature>
<feature type="sequence conflict" description="In Ref. 1; AAA91091." evidence="5" ref="1">
    <original>A</original>
    <variation>T</variation>
    <location>
        <position position="347"/>
    </location>
</feature>
<feature type="strand" evidence="6">
    <location>
        <begin position="7"/>
        <end position="9"/>
    </location>
</feature>
<feature type="strand" evidence="6">
    <location>
        <begin position="12"/>
        <end position="14"/>
    </location>
</feature>
<feature type="strand" evidence="6">
    <location>
        <begin position="17"/>
        <end position="23"/>
    </location>
</feature>
<feature type="turn" evidence="6">
    <location>
        <begin position="25"/>
        <end position="27"/>
    </location>
</feature>
<feature type="strand" evidence="6">
    <location>
        <begin position="30"/>
        <end position="35"/>
    </location>
</feature>
<feature type="helix" evidence="6">
    <location>
        <begin position="39"/>
        <end position="58"/>
    </location>
</feature>
<feature type="helix" evidence="6">
    <location>
        <begin position="61"/>
        <end position="77"/>
    </location>
</feature>
<feature type="helix" evidence="6">
    <location>
        <begin position="79"/>
        <end position="90"/>
    </location>
</feature>
<feature type="helix" evidence="6">
    <location>
        <begin position="94"/>
        <end position="115"/>
    </location>
</feature>
<feature type="strand" evidence="6">
    <location>
        <begin position="120"/>
        <end position="124"/>
    </location>
</feature>
<feature type="helix" evidence="6">
    <location>
        <begin position="125"/>
        <end position="127"/>
    </location>
</feature>
<feature type="helix" evidence="6">
    <location>
        <begin position="130"/>
        <end position="132"/>
    </location>
</feature>
<feature type="strand" evidence="6">
    <location>
        <begin position="135"/>
        <end position="143"/>
    </location>
</feature>
<feature type="strand" evidence="6">
    <location>
        <begin position="145"/>
        <end position="150"/>
    </location>
</feature>
<feature type="strand" evidence="7">
    <location>
        <begin position="153"/>
        <end position="155"/>
    </location>
</feature>
<feature type="helix" evidence="6">
    <location>
        <begin position="158"/>
        <end position="169"/>
    </location>
</feature>
<feature type="strand" evidence="6">
    <location>
        <begin position="173"/>
        <end position="177"/>
    </location>
</feature>
<feature type="turn" evidence="8">
    <location>
        <begin position="180"/>
        <end position="182"/>
    </location>
</feature>
<feature type="helix" evidence="6">
    <location>
        <begin position="183"/>
        <end position="196"/>
    </location>
</feature>
<feature type="strand" evidence="6">
    <location>
        <begin position="202"/>
        <end position="205"/>
    </location>
</feature>
<feature type="helix" evidence="6">
    <location>
        <begin position="210"/>
        <end position="219"/>
    </location>
</feature>
<feature type="strand" evidence="6">
    <location>
        <begin position="225"/>
        <end position="230"/>
    </location>
</feature>
<feature type="helix" evidence="6">
    <location>
        <begin position="232"/>
        <end position="241"/>
    </location>
</feature>
<feature type="turn" evidence="6">
    <location>
        <begin position="242"/>
        <end position="244"/>
    </location>
</feature>
<feature type="strand" evidence="6">
    <location>
        <begin position="247"/>
        <end position="250"/>
    </location>
</feature>
<feature type="strand" evidence="6">
    <location>
        <begin position="255"/>
        <end position="259"/>
    </location>
</feature>
<feature type="helix" evidence="6">
    <location>
        <begin position="265"/>
        <end position="277"/>
    </location>
</feature>
<feature type="helix" evidence="6">
    <location>
        <begin position="278"/>
        <end position="281"/>
    </location>
</feature>
<feature type="strand" evidence="6">
    <location>
        <begin position="284"/>
        <end position="293"/>
    </location>
</feature>
<feature type="helix" evidence="6">
    <location>
        <begin position="294"/>
        <end position="309"/>
    </location>
</feature>
<feature type="helix" evidence="6">
    <location>
        <begin position="316"/>
        <end position="318"/>
    </location>
</feature>
<feature type="helix" evidence="6">
    <location>
        <begin position="328"/>
        <end position="343"/>
    </location>
</feature>
<feature type="strand" evidence="9">
    <location>
        <begin position="347"/>
        <end position="350"/>
    </location>
</feature>
<feature type="strand" evidence="6">
    <location>
        <begin position="362"/>
        <end position="366"/>
    </location>
</feature>
<feature type="helix" evidence="6">
    <location>
        <begin position="372"/>
        <end position="374"/>
    </location>
</feature>
<feature type="strand" evidence="6">
    <location>
        <begin position="380"/>
        <end position="389"/>
    </location>
</feature>
<feature type="helix" evidence="6">
    <location>
        <begin position="391"/>
        <end position="400"/>
    </location>
</feature>
<feature type="strand" evidence="6">
    <location>
        <begin position="401"/>
        <end position="410"/>
    </location>
</feature>
<feature type="helix" evidence="6">
    <location>
        <begin position="414"/>
        <end position="423"/>
    </location>
</feature>
<feature type="strand" evidence="6">
    <location>
        <begin position="426"/>
        <end position="433"/>
    </location>
</feature>
<feature type="strand" evidence="6">
    <location>
        <begin position="451"/>
        <end position="453"/>
    </location>
</feature>
<feature type="helix" evidence="6">
    <location>
        <begin position="457"/>
        <end position="463"/>
    </location>
</feature>
<feature type="strand" evidence="6">
    <location>
        <begin position="465"/>
        <end position="473"/>
    </location>
</feature>
<keyword id="KW-0002">3D-structure</keyword>
<keyword id="KW-0521">NADP</keyword>
<keyword id="KW-0560">Oxidoreductase</keyword>
<keyword id="KW-1185">Reference proteome</keyword>
<comment type="catalytic activity">
    <reaction>
        <text>D-glyceraldehyde 3-phosphate + NADP(+) + H2O = (2R)-3-phosphoglycerate + NADPH + 2 H(+)</text>
        <dbReference type="Rhea" id="RHEA:14669"/>
        <dbReference type="ChEBI" id="CHEBI:15377"/>
        <dbReference type="ChEBI" id="CHEBI:15378"/>
        <dbReference type="ChEBI" id="CHEBI:57783"/>
        <dbReference type="ChEBI" id="CHEBI:58272"/>
        <dbReference type="ChEBI" id="CHEBI:58349"/>
        <dbReference type="ChEBI" id="CHEBI:59776"/>
        <dbReference type="EC" id="1.2.1.9"/>
    </reaction>
</comment>
<comment type="subunit">
    <text evidence="2 3 4">Homotetramer.</text>
</comment>
<comment type="similarity">
    <text evidence="5">Belongs to the aldehyde dehydrogenase family.</text>
</comment>